<organism>
    <name type="scientific">Streptococcus pneumoniae serotype 4 (strain ATCC BAA-334 / TIGR4)</name>
    <dbReference type="NCBI Taxonomy" id="170187"/>
    <lineage>
        <taxon>Bacteria</taxon>
        <taxon>Bacillati</taxon>
        <taxon>Bacillota</taxon>
        <taxon>Bacilli</taxon>
        <taxon>Lactobacillales</taxon>
        <taxon>Streptococcaceae</taxon>
        <taxon>Streptococcus</taxon>
    </lineage>
</organism>
<proteinExistence type="inferred from homology"/>
<reference key="1">
    <citation type="journal article" date="2001" name="Science">
        <title>Complete genome sequence of a virulent isolate of Streptococcus pneumoniae.</title>
        <authorList>
            <person name="Tettelin H."/>
            <person name="Nelson K.E."/>
            <person name="Paulsen I.T."/>
            <person name="Eisen J.A."/>
            <person name="Read T.D."/>
            <person name="Peterson S.N."/>
            <person name="Heidelberg J.F."/>
            <person name="DeBoy R.T."/>
            <person name="Haft D.H."/>
            <person name="Dodson R.J."/>
            <person name="Durkin A.S."/>
            <person name="Gwinn M.L."/>
            <person name="Kolonay J.F."/>
            <person name="Nelson W.C."/>
            <person name="Peterson J.D."/>
            <person name="Umayam L.A."/>
            <person name="White O."/>
            <person name="Salzberg S.L."/>
            <person name="Lewis M.R."/>
            <person name="Radune D."/>
            <person name="Holtzapple E.K."/>
            <person name="Khouri H.M."/>
            <person name="Wolf A.M."/>
            <person name="Utterback T.R."/>
            <person name="Hansen C.L."/>
            <person name="McDonald L.A."/>
            <person name="Feldblyum T.V."/>
            <person name="Angiuoli S.V."/>
            <person name="Dickinson T."/>
            <person name="Hickey E.K."/>
            <person name="Holt I.E."/>
            <person name="Loftus B.J."/>
            <person name="Yang F."/>
            <person name="Smith H.O."/>
            <person name="Venter J.C."/>
            <person name="Dougherty B.A."/>
            <person name="Morrison D.A."/>
            <person name="Hollingshead S.K."/>
            <person name="Fraser C.M."/>
        </authorList>
    </citation>
    <scope>NUCLEOTIDE SEQUENCE [LARGE SCALE GENOMIC DNA]</scope>
    <source>
        <strain>ATCC BAA-334 / TIGR4</strain>
    </source>
</reference>
<name>DAPH_STRPN</name>
<keyword id="KW-0012">Acyltransferase</keyword>
<keyword id="KW-0028">Amino-acid biosynthesis</keyword>
<keyword id="KW-0220">Diaminopimelate biosynthesis</keyword>
<keyword id="KW-0457">Lysine biosynthesis</keyword>
<keyword id="KW-1185">Reference proteome</keyword>
<keyword id="KW-0677">Repeat</keyword>
<keyword id="KW-0808">Transferase</keyword>
<comment type="function">
    <text evidence="1">Catalyzes the transfer of an acetyl group from acetyl-CoA to tetrahydrodipicolinate.</text>
</comment>
<comment type="catalytic activity">
    <reaction evidence="1">
        <text>(S)-2,3,4,5-tetrahydrodipicolinate + acetyl-CoA + H2O = L-2-acetamido-6-oxoheptanedioate + CoA</text>
        <dbReference type="Rhea" id="RHEA:13085"/>
        <dbReference type="ChEBI" id="CHEBI:15377"/>
        <dbReference type="ChEBI" id="CHEBI:16845"/>
        <dbReference type="ChEBI" id="CHEBI:57287"/>
        <dbReference type="ChEBI" id="CHEBI:57288"/>
        <dbReference type="ChEBI" id="CHEBI:58117"/>
        <dbReference type="EC" id="2.3.1.89"/>
    </reaction>
</comment>
<comment type="pathway">
    <text evidence="1">Amino-acid biosynthesis; L-lysine biosynthesis via DAP pathway; LL-2,6-diaminopimelate from (S)-tetrahydrodipicolinate (acetylase route): step 1/3.</text>
</comment>
<comment type="similarity">
    <text evidence="1">Belongs to the transferase hexapeptide repeat family. DapH subfamily.</text>
</comment>
<protein>
    <recommendedName>
        <fullName evidence="1">2,3,4,5-tetrahydropyridine-2,6-dicarboxylate N-acetyltransferase</fullName>
        <ecNumber evidence="1">2.3.1.89</ecNumber>
    </recommendedName>
    <alternativeName>
        <fullName evidence="1">Tetrahydrodipicolinate N-acetyltransferase</fullName>
        <shortName evidence="1">THP acetyltransferase</shortName>
        <shortName evidence="1">Tetrahydropicolinate acetylase</shortName>
    </alternativeName>
</protein>
<feature type="chain" id="PRO_0000376708" description="2,3,4,5-tetrahydropyridine-2,6-dicarboxylate N-acetyltransferase">
    <location>
        <begin position="1"/>
        <end position="232"/>
    </location>
</feature>
<evidence type="ECO:0000255" key="1">
    <source>
        <dbReference type="HAMAP-Rule" id="MF_01691"/>
    </source>
</evidence>
<gene>
    <name evidence="1" type="primary">dapH</name>
    <name type="ordered locus">SP_2097</name>
</gene>
<sequence>MTATKMNAQEIIQFIANAEKKTSVKVTFEGQLATAVPSSVVKLGNVLFGDWKDVAPLLEGLVENQDYVVEQDARNSAVPLLDKRAINARIEPGAIIRDQVEIGDNAVIMMGSVINIGAEIGAGTMIDMGAILGGRAIVGKNSHVGAGAVLAGVIEPASAEPVRVGDNVLIGANAVVIEGVQIGSGSVVAAGAIVTQDVPENVVVAGVPARIIKEIDAQTQQKTALEDALRTL</sequence>
<dbReference type="EC" id="2.3.1.89" evidence="1"/>
<dbReference type="EMBL" id="AE005672">
    <property type="protein sequence ID" value="AAK76156.1"/>
    <property type="molecule type" value="Genomic_DNA"/>
</dbReference>
<dbReference type="PIR" id="C95245">
    <property type="entry name" value="C95245"/>
</dbReference>
<dbReference type="SMR" id="Q97NE6"/>
<dbReference type="PaxDb" id="170187-SP_2097"/>
<dbReference type="EnsemblBacteria" id="AAK76156">
    <property type="protein sequence ID" value="AAK76156"/>
    <property type="gene ID" value="SP_2097"/>
</dbReference>
<dbReference type="KEGG" id="spn:SP_2097"/>
<dbReference type="eggNOG" id="COG2171">
    <property type="taxonomic scope" value="Bacteria"/>
</dbReference>
<dbReference type="PhylomeDB" id="Q97NE6"/>
<dbReference type="BioCyc" id="SPNE170187:G1FZB-2183-MONOMER"/>
<dbReference type="UniPathway" id="UPA00034">
    <property type="reaction ID" value="UER00022"/>
</dbReference>
<dbReference type="Proteomes" id="UP000000585">
    <property type="component" value="Chromosome"/>
</dbReference>
<dbReference type="GO" id="GO:0047200">
    <property type="term" value="F:tetrahydrodipicolinate N-acetyltransferase activity"/>
    <property type="evidence" value="ECO:0007669"/>
    <property type="project" value="UniProtKB-EC"/>
</dbReference>
<dbReference type="GO" id="GO:0019877">
    <property type="term" value="P:diaminopimelate biosynthetic process"/>
    <property type="evidence" value="ECO:0007669"/>
    <property type="project" value="UniProtKB-UniRule"/>
</dbReference>
<dbReference type="GO" id="GO:0009089">
    <property type="term" value="P:lysine biosynthetic process via diaminopimelate"/>
    <property type="evidence" value="ECO:0007669"/>
    <property type="project" value="UniProtKB-UniRule"/>
</dbReference>
<dbReference type="Gene3D" id="2.160.10.10">
    <property type="entry name" value="Hexapeptide repeat proteins"/>
    <property type="match status" value="1"/>
</dbReference>
<dbReference type="Gene3D" id="3.30.70.250">
    <property type="entry name" value="Malonyl-CoA ACP transacylase, ACP-binding"/>
    <property type="match status" value="1"/>
</dbReference>
<dbReference type="HAMAP" id="MF_01691">
    <property type="entry name" value="DapH"/>
    <property type="match status" value="1"/>
</dbReference>
<dbReference type="InterPro" id="IPR019873">
    <property type="entry name" value="DapH"/>
</dbReference>
<dbReference type="InterPro" id="IPR013710">
    <property type="entry name" value="DapH_N"/>
</dbReference>
<dbReference type="InterPro" id="IPR001451">
    <property type="entry name" value="Hexapep"/>
</dbReference>
<dbReference type="InterPro" id="IPR018357">
    <property type="entry name" value="Hexapep_transf_CS"/>
</dbReference>
<dbReference type="InterPro" id="IPR050179">
    <property type="entry name" value="Trans_hexapeptide_repeat"/>
</dbReference>
<dbReference type="InterPro" id="IPR011004">
    <property type="entry name" value="Trimer_LpxA-like_sf"/>
</dbReference>
<dbReference type="NCBIfam" id="TIGR03532">
    <property type="entry name" value="DapD_Ac"/>
    <property type="match status" value="1"/>
</dbReference>
<dbReference type="PANTHER" id="PTHR43300:SF10">
    <property type="entry name" value="2,3,4,5-TETRAHYDROPYRIDINE-2,6-DICARBOXYLATE N-ACETYLTRANSFERASE"/>
    <property type="match status" value="1"/>
</dbReference>
<dbReference type="PANTHER" id="PTHR43300">
    <property type="entry name" value="ACETYLTRANSFERASE"/>
    <property type="match status" value="1"/>
</dbReference>
<dbReference type="Pfam" id="PF08503">
    <property type="entry name" value="DapH_N"/>
    <property type="match status" value="1"/>
</dbReference>
<dbReference type="Pfam" id="PF00132">
    <property type="entry name" value="Hexapep"/>
    <property type="match status" value="1"/>
</dbReference>
<dbReference type="Pfam" id="PF14602">
    <property type="entry name" value="Hexapep_2"/>
    <property type="match status" value="2"/>
</dbReference>
<dbReference type="SUPFAM" id="SSF51161">
    <property type="entry name" value="Trimeric LpxA-like enzymes"/>
    <property type="match status" value="1"/>
</dbReference>
<dbReference type="PROSITE" id="PS00101">
    <property type="entry name" value="HEXAPEP_TRANSFERASES"/>
    <property type="match status" value="2"/>
</dbReference>
<accession>Q97NE6</accession>